<keyword id="KW-0963">Cytoplasm</keyword>
<comment type="subunit">
    <text evidence="1">Homodimer.</text>
</comment>
<comment type="subcellular location">
    <subcellularLocation>
        <location evidence="1">Cytoplasm</location>
    </subcellularLocation>
</comment>
<comment type="similarity">
    <text evidence="1">Belongs to the CutC family.</text>
</comment>
<comment type="caution">
    <text evidence="1">Once thought to be involved in copper homeostasis, experiments in E.coli have shown this is not the case.</text>
</comment>
<accession>B5YR19</accession>
<name>CUTC_ECO5E</name>
<gene>
    <name evidence="1" type="primary">cutC</name>
    <name type="ordered locus">ECH74115_2610</name>
</gene>
<protein>
    <recommendedName>
        <fullName evidence="1">PF03932 family protein CutC</fullName>
    </recommendedName>
</protein>
<dbReference type="EMBL" id="CP001164">
    <property type="protein sequence ID" value="ACI35743.1"/>
    <property type="molecule type" value="Genomic_DNA"/>
</dbReference>
<dbReference type="RefSeq" id="WP_001185748.1">
    <property type="nucleotide sequence ID" value="NC_011353.1"/>
</dbReference>
<dbReference type="SMR" id="B5YR19"/>
<dbReference type="KEGG" id="ecf:ECH74115_2610"/>
<dbReference type="HOGENOM" id="CLU_050555_3_1_6"/>
<dbReference type="GO" id="GO:0005737">
    <property type="term" value="C:cytoplasm"/>
    <property type="evidence" value="ECO:0007669"/>
    <property type="project" value="UniProtKB-SubCell"/>
</dbReference>
<dbReference type="GO" id="GO:0005507">
    <property type="term" value="F:copper ion binding"/>
    <property type="evidence" value="ECO:0007669"/>
    <property type="project" value="TreeGrafter"/>
</dbReference>
<dbReference type="FunFam" id="3.20.20.380:FF:000001">
    <property type="entry name" value="Copper homeostasis protein CutC"/>
    <property type="match status" value="1"/>
</dbReference>
<dbReference type="Gene3D" id="3.20.20.380">
    <property type="entry name" value="Copper homeostasis (CutC) domain"/>
    <property type="match status" value="1"/>
</dbReference>
<dbReference type="HAMAP" id="MF_00795">
    <property type="entry name" value="CutC"/>
    <property type="match status" value="1"/>
</dbReference>
<dbReference type="InterPro" id="IPR005627">
    <property type="entry name" value="CutC-like"/>
</dbReference>
<dbReference type="InterPro" id="IPR036822">
    <property type="entry name" value="CutC-like_dom_sf"/>
</dbReference>
<dbReference type="NCBIfam" id="NF008603">
    <property type="entry name" value="PRK11572.1"/>
    <property type="match status" value="1"/>
</dbReference>
<dbReference type="PANTHER" id="PTHR12598">
    <property type="entry name" value="COPPER HOMEOSTASIS PROTEIN CUTC"/>
    <property type="match status" value="1"/>
</dbReference>
<dbReference type="PANTHER" id="PTHR12598:SF0">
    <property type="entry name" value="COPPER HOMEOSTASIS PROTEIN CUTC HOMOLOG"/>
    <property type="match status" value="1"/>
</dbReference>
<dbReference type="Pfam" id="PF03932">
    <property type="entry name" value="CutC"/>
    <property type="match status" value="1"/>
</dbReference>
<dbReference type="SUPFAM" id="SSF110395">
    <property type="entry name" value="CutC-like"/>
    <property type="match status" value="1"/>
</dbReference>
<feature type="chain" id="PRO_1000133831" description="PF03932 family protein CutC">
    <location>
        <begin position="1"/>
        <end position="248"/>
    </location>
</feature>
<sequence length="248" mass="26631">MALLEICCYSMECALTAQQNGADRVELCAAPKEGGLTPSLGVLKSVRQRVTIPVHPIIRPRGGDFCYSDGEFAAILEDVRTVRELGFPGLVTGVLDVDGNVDMSRMEKIMAAAGPLAVTFHRAFDMCANPLNTLNNLAELGIARVLTSGQKSDALQGLSKIMELIAHRDAPIIMAGAGVRAENLHHFLDAGVLEVHSSAGAWQASPMRYRNQGLSMSSDAHADEYSRYVVDGAAVAEMKGIIERHQAK</sequence>
<organism>
    <name type="scientific">Escherichia coli O157:H7 (strain EC4115 / EHEC)</name>
    <dbReference type="NCBI Taxonomy" id="444450"/>
    <lineage>
        <taxon>Bacteria</taxon>
        <taxon>Pseudomonadati</taxon>
        <taxon>Pseudomonadota</taxon>
        <taxon>Gammaproteobacteria</taxon>
        <taxon>Enterobacterales</taxon>
        <taxon>Enterobacteriaceae</taxon>
        <taxon>Escherichia</taxon>
    </lineage>
</organism>
<evidence type="ECO:0000255" key="1">
    <source>
        <dbReference type="HAMAP-Rule" id="MF_00795"/>
    </source>
</evidence>
<proteinExistence type="inferred from homology"/>
<reference key="1">
    <citation type="journal article" date="2011" name="Proc. Natl. Acad. Sci. U.S.A.">
        <title>Genomic anatomy of Escherichia coli O157:H7 outbreaks.</title>
        <authorList>
            <person name="Eppinger M."/>
            <person name="Mammel M.K."/>
            <person name="Leclerc J.E."/>
            <person name="Ravel J."/>
            <person name="Cebula T.A."/>
        </authorList>
    </citation>
    <scope>NUCLEOTIDE SEQUENCE [LARGE SCALE GENOMIC DNA]</scope>
    <source>
        <strain>EC4115 / EHEC</strain>
    </source>
</reference>